<keyword id="KW-1185">Reference proteome</keyword>
<feature type="chain" id="PRO_0000109967" description="UPF0342 protein BpOF4_11360">
    <location>
        <begin position="1"/>
        <end position="118"/>
    </location>
</feature>
<protein>
    <recommendedName>
        <fullName>UPF0342 protein BpOF4_11360</fullName>
    </recommendedName>
</protein>
<proteinExistence type="inferred from homology"/>
<sequence>MSNVYDKAHELKKAIAESEEFSALKSMHEEIEADEIAKKMLENFRNLQLELQQKQMQGIQITEEEAQKAQQQFELVQQHELISKLMEAEQRLSVIIGDINKIITEPLEEIYGNPEGQQ</sequence>
<organism>
    <name type="scientific">Alkalihalophilus pseudofirmus (strain ATCC BAA-2126 / JCM 17055 / OF4)</name>
    <name type="common">Bacillus pseudofirmus</name>
    <dbReference type="NCBI Taxonomy" id="398511"/>
    <lineage>
        <taxon>Bacteria</taxon>
        <taxon>Bacillati</taxon>
        <taxon>Bacillota</taxon>
        <taxon>Bacilli</taxon>
        <taxon>Bacillales</taxon>
        <taxon>Bacillaceae</taxon>
        <taxon>Alkalihalophilus</taxon>
    </lineage>
</organism>
<comment type="similarity">
    <text evidence="1">Belongs to the UPF0342 family.</text>
</comment>
<reference key="1">
    <citation type="journal article" date="1999" name="Extremophiles">
        <title>Sequence analysis and functional studies of a chromosomal region of alkaliphilic Bacillus firmus OF4 encoding an ABC-type transporter with similarity of sequence and Na+ exclusion capacity to the Bacillus subtilis NatAB transporter.</title>
        <authorList>
            <person name="Wei Y."/>
            <person name="Guffanti A.A."/>
            <person name="Krulwich T.A."/>
        </authorList>
    </citation>
    <scope>NUCLEOTIDE SEQUENCE [GENOMIC DNA]</scope>
</reference>
<reference key="2">
    <citation type="journal article" date="2011" name="Environ. Microbiol.">
        <title>Genome of alkaliphilic Bacillus pseudofirmus OF4 reveals adaptations that support the ability to grow in an external pH range from 7.5 to 11.4.</title>
        <authorList>
            <person name="Janto B."/>
            <person name="Ahmed A."/>
            <person name="Ito M."/>
            <person name="Liu J."/>
            <person name="Hicks D.B."/>
            <person name="Pagni S."/>
            <person name="Fackelmayer O.J."/>
            <person name="Smith T.A."/>
            <person name="Earl J."/>
            <person name="Elbourne L.D."/>
            <person name="Hassan K."/>
            <person name="Paulsen I.T."/>
            <person name="Kolsto A.B."/>
            <person name="Tourasse N.J."/>
            <person name="Ehrlich G.D."/>
            <person name="Boissy R."/>
            <person name="Ivey D.M."/>
            <person name="Li G."/>
            <person name="Xue Y."/>
            <person name="Ma Y."/>
            <person name="Hu F.Z."/>
            <person name="Krulwich T.A."/>
        </authorList>
    </citation>
    <scope>NUCLEOTIDE SEQUENCE [LARGE SCALE GENOMIC DNA]</scope>
    <source>
        <strain>ATCC BAA-2126 / JCM 17055 / OF4</strain>
    </source>
</reference>
<accession>O87558</accession>
<accession>D3FVC4</accession>
<evidence type="ECO:0000305" key="1"/>
<dbReference type="EMBL" id="AF084104">
    <property type="protein sequence ID" value="AAC62417.1"/>
    <property type="molecule type" value="Genomic_DNA"/>
</dbReference>
<dbReference type="EMBL" id="CP001878">
    <property type="protein sequence ID" value="ADC50325.1"/>
    <property type="molecule type" value="Genomic_DNA"/>
</dbReference>
<dbReference type="RefSeq" id="WP_012957691.1">
    <property type="nucleotide sequence ID" value="NC_013791.2"/>
</dbReference>
<dbReference type="SMR" id="O87558"/>
<dbReference type="STRING" id="398511.BpOF4_11360"/>
<dbReference type="KEGG" id="bpf:BpOF4_11360"/>
<dbReference type="eggNOG" id="COG3679">
    <property type="taxonomic scope" value="Bacteria"/>
</dbReference>
<dbReference type="HOGENOM" id="CLU_140243_3_0_9"/>
<dbReference type="Proteomes" id="UP000001544">
    <property type="component" value="Chromosome"/>
</dbReference>
<dbReference type="Gene3D" id="1.20.1500.10">
    <property type="entry name" value="YheA/YmcA-like"/>
    <property type="match status" value="1"/>
</dbReference>
<dbReference type="HAMAP" id="MF_01526">
    <property type="entry name" value="UPF0342"/>
    <property type="match status" value="1"/>
</dbReference>
<dbReference type="InterPro" id="IPR010368">
    <property type="entry name" value="Com_YlbF"/>
</dbReference>
<dbReference type="InterPro" id="IPR023378">
    <property type="entry name" value="YheA/YmcA-like_dom_sf"/>
</dbReference>
<dbReference type="Pfam" id="PF06133">
    <property type="entry name" value="Com_YlbF"/>
    <property type="match status" value="1"/>
</dbReference>
<dbReference type="SUPFAM" id="SSF158622">
    <property type="entry name" value="YheA/YmcA-like"/>
    <property type="match status" value="1"/>
</dbReference>
<name>Y2272_ALKPO</name>
<gene>
    <name type="ordered locus">BpOF4_11360</name>
</gene>